<name>MNMA_RHOP5</name>
<keyword id="KW-0067">ATP-binding</keyword>
<keyword id="KW-0963">Cytoplasm</keyword>
<keyword id="KW-1015">Disulfide bond</keyword>
<keyword id="KW-0547">Nucleotide-binding</keyword>
<keyword id="KW-0694">RNA-binding</keyword>
<keyword id="KW-0808">Transferase</keyword>
<keyword id="KW-0819">tRNA processing</keyword>
<keyword id="KW-0820">tRNA-binding</keyword>
<organism>
    <name type="scientific">Rhodopseudomonas palustris (strain BisA53)</name>
    <dbReference type="NCBI Taxonomy" id="316055"/>
    <lineage>
        <taxon>Bacteria</taxon>
        <taxon>Pseudomonadati</taxon>
        <taxon>Pseudomonadota</taxon>
        <taxon>Alphaproteobacteria</taxon>
        <taxon>Hyphomicrobiales</taxon>
        <taxon>Nitrobacteraceae</taxon>
        <taxon>Rhodopseudomonas</taxon>
    </lineage>
</organism>
<evidence type="ECO:0000255" key="1">
    <source>
        <dbReference type="HAMAP-Rule" id="MF_00144"/>
    </source>
</evidence>
<evidence type="ECO:0000305" key="2"/>
<proteinExistence type="inferred from homology"/>
<gene>
    <name evidence="1" type="primary">mnmA</name>
    <name type="ordered locus">RPE_1039</name>
</gene>
<feature type="chain" id="PRO_0000349772" description="tRNA-specific 2-thiouridylase MnmA">
    <location>
        <begin position="1"/>
        <end position="400"/>
    </location>
</feature>
<feature type="region of interest" description="Interaction with tRNA" evidence="1">
    <location>
        <begin position="160"/>
        <end position="162"/>
    </location>
</feature>
<feature type="active site" description="Nucleophile" evidence="1">
    <location>
        <position position="113"/>
    </location>
</feature>
<feature type="active site" description="Cysteine persulfide intermediate" evidence="1">
    <location>
        <position position="210"/>
    </location>
</feature>
<feature type="binding site" evidence="1">
    <location>
        <begin position="19"/>
        <end position="26"/>
    </location>
    <ligand>
        <name>ATP</name>
        <dbReference type="ChEBI" id="CHEBI:30616"/>
    </ligand>
</feature>
<feature type="binding site" evidence="1">
    <location>
        <position position="45"/>
    </location>
    <ligand>
        <name>ATP</name>
        <dbReference type="ChEBI" id="CHEBI:30616"/>
    </ligand>
</feature>
<feature type="binding site" evidence="1">
    <location>
        <position position="137"/>
    </location>
    <ligand>
        <name>ATP</name>
        <dbReference type="ChEBI" id="CHEBI:30616"/>
    </ligand>
</feature>
<feature type="site" description="Interaction with tRNA" evidence="1">
    <location>
        <position position="138"/>
    </location>
</feature>
<feature type="site" description="Interaction with tRNA" evidence="1">
    <location>
        <position position="352"/>
    </location>
</feature>
<feature type="disulfide bond" description="Alternate" evidence="1">
    <location>
        <begin position="113"/>
        <end position="210"/>
    </location>
</feature>
<dbReference type="EC" id="2.8.1.13" evidence="1"/>
<dbReference type="EMBL" id="CP000463">
    <property type="protein sequence ID" value="ABJ04994.1"/>
    <property type="status" value="ALT_INIT"/>
    <property type="molecule type" value="Genomic_DNA"/>
</dbReference>
<dbReference type="SMR" id="Q07SU0"/>
<dbReference type="STRING" id="316055.RPE_1039"/>
<dbReference type="KEGG" id="rpe:RPE_1039"/>
<dbReference type="eggNOG" id="COG0482">
    <property type="taxonomic scope" value="Bacteria"/>
</dbReference>
<dbReference type="HOGENOM" id="CLU_035188_0_1_5"/>
<dbReference type="OrthoDB" id="9800696at2"/>
<dbReference type="GO" id="GO:0005737">
    <property type="term" value="C:cytoplasm"/>
    <property type="evidence" value="ECO:0007669"/>
    <property type="project" value="UniProtKB-SubCell"/>
</dbReference>
<dbReference type="GO" id="GO:0005524">
    <property type="term" value="F:ATP binding"/>
    <property type="evidence" value="ECO:0007669"/>
    <property type="project" value="UniProtKB-KW"/>
</dbReference>
<dbReference type="GO" id="GO:0000049">
    <property type="term" value="F:tRNA binding"/>
    <property type="evidence" value="ECO:0007669"/>
    <property type="project" value="UniProtKB-KW"/>
</dbReference>
<dbReference type="GO" id="GO:0103016">
    <property type="term" value="F:tRNA-uridine 2-sulfurtransferase activity"/>
    <property type="evidence" value="ECO:0007669"/>
    <property type="project" value="UniProtKB-EC"/>
</dbReference>
<dbReference type="GO" id="GO:0002143">
    <property type="term" value="P:tRNA wobble position uridine thiolation"/>
    <property type="evidence" value="ECO:0007669"/>
    <property type="project" value="TreeGrafter"/>
</dbReference>
<dbReference type="CDD" id="cd01998">
    <property type="entry name" value="MnmA_TRMU-like"/>
    <property type="match status" value="1"/>
</dbReference>
<dbReference type="FunFam" id="2.30.30.280:FF:000001">
    <property type="entry name" value="tRNA-specific 2-thiouridylase MnmA"/>
    <property type="match status" value="1"/>
</dbReference>
<dbReference type="FunFam" id="3.40.50.620:FF:000115">
    <property type="entry name" value="tRNA-specific 2-thiouridylase MnmA"/>
    <property type="match status" value="1"/>
</dbReference>
<dbReference type="Gene3D" id="2.30.30.280">
    <property type="entry name" value="Adenine nucleotide alpha hydrolases-like domains"/>
    <property type="match status" value="1"/>
</dbReference>
<dbReference type="Gene3D" id="3.40.50.620">
    <property type="entry name" value="HUPs"/>
    <property type="match status" value="1"/>
</dbReference>
<dbReference type="Gene3D" id="2.40.30.10">
    <property type="entry name" value="Translation factors"/>
    <property type="match status" value="1"/>
</dbReference>
<dbReference type="HAMAP" id="MF_00144">
    <property type="entry name" value="tRNA_thiouridyl_MnmA"/>
    <property type="match status" value="1"/>
</dbReference>
<dbReference type="InterPro" id="IPR004506">
    <property type="entry name" value="MnmA-like"/>
</dbReference>
<dbReference type="InterPro" id="IPR046885">
    <property type="entry name" value="MnmA-like_C"/>
</dbReference>
<dbReference type="InterPro" id="IPR046884">
    <property type="entry name" value="MnmA-like_central"/>
</dbReference>
<dbReference type="InterPro" id="IPR023382">
    <property type="entry name" value="MnmA-like_central_sf"/>
</dbReference>
<dbReference type="InterPro" id="IPR014729">
    <property type="entry name" value="Rossmann-like_a/b/a_fold"/>
</dbReference>
<dbReference type="NCBIfam" id="NF001138">
    <property type="entry name" value="PRK00143.1"/>
    <property type="match status" value="1"/>
</dbReference>
<dbReference type="NCBIfam" id="TIGR00420">
    <property type="entry name" value="trmU"/>
    <property type="match status" value="1"/>
</dbReference>
<dbReference type="PANTHER" id="PTHR11933:SF5">
    <property type="entry name" value="MITOCHONDRIAL TRNA-SPECIFIC 2-THIOURIDYLASE 1"/>
    <property type="match status" value="1"/>
</dbReference>
<dbReference type="PANTHER" id="PTHR11933">
    <property type="entry name" value="TRNA 5-METHYLAMINOMETHYL-2-THIOURIDYLATE -METHYLTRANSFERASE"/>
    <property type="match status" value="1"/>
</dbReference>
<dbReference type="Pfam" id="PF03054">
    <property type="entry name" value="tRNA_Me_trans"/>
    <property type="match status" value="1"/>
</dbReference>
<dbReference type="Pfam" id="PF20258">
    <property type="entry name" value="tRNA_Me_trans_C"/>
    <property type="match status" value="1"/>
</dbReference>
<dbReference type="Pfam" id="PF20259">
    <property type="entry name" value="tRNA_Me_trans_M"/>
    <property type="match status" value="1"/>
</dbReference>
<dbReference type="SUPFAM" id="SSF52402">
    <property type="entry name" value="Adenine nucleotide alpha hydrolases-like"/>
    <property type="match status" value="1"/>
</dbReference>
<accession>Q07SU0</accession>
<protein>
    <recommendedName>
        <fullName evidence="1">tRNA-specific 2-thiouridylase MnmA</fullName>
        <ecNumber evidence="1">2.8.1.13</ecNumber>
    </recommendedName>
</protein>
<reference key="1">
    <citation type="submission" date="2006-09" db="EMBL/GenBank/DDBJ databases">
        <title>Complete sequence of Rhodopseudomonas palustris BisA53.</title>
        <authorList>
            <consortium name="US DOE Joint Genome Institute"/>
            <person name="Copeland A."/>
            <person name="Lucas S."/>
            <person name="Lapidus A."/>
            <person name="Barry K."/>
            <person name="Detter J.C."/>
            <person name="Glavina del Rio T."/>
            <person name="Hammon N."/>
            <person name="Israni S."/>
            <person name="Dalin E."/>
            <person name="Tice H."/>
            <person name="Pitluck S."/>
            <person name="Chain P."/>
            <person name="Malfatti S."/>
            <person name="Shin M."/>
            <person name="Vergez L."/>
            <person name="Schmutz J."/>
            <person name="Larimer F."/>
            <person name="Land M."/>
            <person name="Hauser L."/>
            <person name="Pelletier D.A."/>
            <person name="Kyrpides N."/>
            <person name="Kim E."/>
            <person name="Harwood C.S."/>
            <person name="Oda Y."/>
            <person name="Richardson P."/>
        </authorList>
    </citation>
    <scope>NUCLEOTIDE SEQUENCE [LARGE SCALE GENOMIC DNA]</scope>
    <source>
        <strain>BisA53</strain>
    </source>
</reference>
<comment type="function">
    <text evidence="1">Catalyzes the 2-thiolation of uridine at the wobble position (U34) of tRNA, leading to the formation of s(2)U34.</text>
</comment>
<comment type="catalytic activity">
    <reaction evidence="1">
        <text>S-sulfanyl-L-cysteinyl-[protein] + uridine(34) in tRNA + AH2 + ATP = 2-thiouridine(34) in tRNA + L-cysteinyl-[protein] + A + AMP + diphosphate + H(+)</text>
        <dbReference type="Rhea" id="RHEA:47032"/>
        <dbReference type="Rhea" id="RHEA-COMP:10131"/>
        <dbReference type="Rhea" id="RHEA-COMP:11726"/>
        <dbReference type="Rhea" id="RHEA-COMP:11727"/>
        <dbReference type="Rhea" id="RHEA-COMP:11728"/>
        <dbReference type="ChEBI" id="CHEBI:13193"/>
        <dbReference type="ChEBI" id="CHEBI:15378"/>
        <dbReference type="ChEBI" id="CHEBI:17499"/>
        <dbReference type="ChEBI" id="CHEBI:29950"/>
        <dbReference type="ChEBI" id="CHEBI:30616"/>
        <dbReference type="ChEBI" id="CHEBI:33019"/>
        <dbReference type="ChEBI" id="CHEBI:61963"/>
        <dbReference type="ChEBI" id="CHEBI:65315"/>
        <dbReference type="ChEBI" id="CHEBI:87170"/>
        <dbReference type="ChEBI" id="CHEBI:456215"/>
        <dbReference type="EC" id="2.8.1.13"/>
    </reaction>
</comment>
<comment type="subcellular location">
    <subcellularLocation>
        <location evidence="1">Cytoplasm</location>
    </subcellularLocation>
</comment>
<comment type="similarity">
    <text evidence="1">Belongs to the MnmA/TRMU family.</text>
</comment>
<comment type="sequence caution" evidence="2">
    <conflict type="erroneous initiation">
        <sequence resource="EMBL-CDS" id="ABJ04994"/>
    </conflict>
</comment>
<sequence>MLNSLDLEGRPQDTRVVVAMSGGVDSSTTAALLKAEGYDVVGITLQLYDHGEAIHRKGACCAGQDIHDARTVAERIGIPHYVLDYESRFRESVIDSFATSYATGETPVPCIECNRSIKFRDLLSTARELGAAVLATGHYVSSRRLPDGSRALVCAADADRDQSYFLFATTREQLDFLRFPLGDMTKPQTRELARSFGLSVADKHDSQDICFVPSGRYSDVVGRLKPNAMEPGDIVDLDGRVLGKHHGIVHFTVGQRRGLGIASHAPLYVLRLEPSTRRVVVGPRAALRMDRILLRDVNWIGDNSLDLAVGDGLEMFVRVRSTRRPQPAWLRAIDGEYQVELIAGEDGVSPGQACVFYDAPEGQARVLGGGFIKSAAPRAANKDARGAAAANRPLAAGVRG</sequence>